<proteinExistence type="inferred from homology"/>
<accession>P0AA81</accession>
<accession>P42613</accession>
<dbReference type="EMBL" id="AE005174">
    <property type="protein sequence ID" value="AAG58257.1"/>
    <property type="molecule type" value="Genomic_DNA"/>
</dbReference>
<dbReference type="EMBL" id="BA000007">
    <property type="protein sequence ID" value="BAB37428.1"/>
    <property type="molecule type" value="Genomic_DNA"/>
</dbReference>
<dbReference type="PIR" id="E85974">
    <property type="entry name" value="E85974"/>
</dbReference>
<dbReference type="PIR" id="E91129">
    <property type="entry name" value="E91129"/>
</dbReference>
<dbReference type="RefSeq" id="NP_312032.1">
    <property type="nucleotide sequence ID" value="NC_002695.1"/>
</dbReference>
<dbReference type="RefSeq" id="WP_000599636.1">
    <property type="nucleotide sequence ID" value="NZ_VOAI01000009.1"/>
</dbReference>
<dbReference type="SMR" id="P0AA81"/>
<dbReference type="STRING" id="155864.Z4479"/>
<dbReference type="GeneID" id="75203757"/>
<dbReference type="GeneID" id="916162"/>
<dbReference type="KEGG" id="ece:Z4479"/>
<dbReference type="KEGG" id="ecs:ECs_4005"/>
<dbReference type="PATRIC" id="fig|386585.9.peg.4179"/>
<dbReference type="eggNOG" id="COG2271">
    <property type="taxonomic scope" value="Bacteria"/>
</dbReference>
<dbReference type="HOGENOM" id="CLU_001265_5_1_6"/>
<dbReference type="OMA" id="YNEQSQM"/>
<dbReference type="Proteomes" id="UP000000558">
    <property type="component" value="Chromosome"/>
</dbReference>
<dbReference type="Proteomes" id="UP000002519">
    <property type="component" value="Chromosome"/>
</dbReference>
<dbReference type="GO" id="GO:0005886">
    <property type="term" value="C:plasma membrane"/>
    <property type="evidence" value="ECO:0007669"/>
    <property type="project" value="UniProtKB-SubCell"/>
</dbReference>
<dbReference type="GO" id="GO:0022857">
    <property type="term" value="F:transmembrane transporter activity"/>
    <property type="evidence" value="ECO:0007669"/>
    <property type="project" value="InterPro"/>
</dbReference>
<dbReference type="CDD" id="cd17319">
    <property type="entry name" value="MFS_ExuT_GudP_like"/>
    <property type="match status" value="1"/>
</dbReference>
<dbReference type="FunFam" id="1.20.1250.20:FF:000006">
    <property type="entry name" value="MFS transporter"/>
    <property type="match status" value="1"/>
</dbReference>
<dbReference type="FunFam" id="1.20.1250.20:FF:000010">
    <property type="entry name" value="Probable glucarate transporter"/>
    <property type="match status" value="1"/>
</dbReference>
<dbReference type="Gene3D" id="1.20.1250.20">
    <property type="entry name" value="MFS general substrate transporter like domains"/>
    <property type="match status" value="2"/>
</dbReference>
<dbReference type="InterPro" id="IPR011701">
    <property type="entry name" value="MFS"/>
</dbReference>
<dbReference type="InterPro" id="IPR020846">
    <property type="entry name" value="MFS_dom"/>
</dbReference>
<dbReference type="InterPro" id="IPR050382">
    <property type="entry name" value="MFS_Na/Anion_cotransporter"/>
</dbReference>
<dbReference type="InterPro" id="IPR036259">
    <property type="entry name" value="MFS_trans_sf"/>
</dbReference>
<dbReference type="InterPro" id="IPR000849">
    <property type="entry name" value="Sugar_P_transporter"/>
</dbReference>
<dbReference type="NCBIfam" id="TIGR00893">
    <property type="entry name" value="2A0114"/>
    <property type="match status" value="1"/>
</dbReference>
<dbReference type="PANTHER" id="PTHR11662:SF399">
    <property type="entry name" value="FI19708P1-RELATED"/>
    <property type="match status" value="1"/>
</dbReference>
<dbReference type="PANTHER" id="PTHR11662">
    <property type="entry name" value="SOLUTE CARRIER FAMILY 17"/>
    <property type="match status" value="1"/>
</dbReference>
<dbReference type="Pfam" id="PF07690">
    <property type="entry name" value="MFS_1"/>
    <property type="match status" value="2"/>
</dbReference>
<dbReference type="PIRSF" id="PIRSF002808">
    <property type="entry name" value="Hexose_phosphate_transp"/>
    <property type="match status" value="1"/>
</dbReference>
<dbReference type="SUPFAM" id="SSF103473">
    <property type="entry name" value="MFS general substrate transporter"/>
    <property type="match status" value="1"/>
</dbReference>
<dbReference type="PROSITE" id="PS50850">
    <property type="entry name" value="MFS"/>
    <property type="match status" value="1"/>
</dbReference>
<gene>
    <name type="primary">garP</name>
    <name type="ordered locus">Z4479</name>
    <name type="ordered locus">ECs4005</name>
</gene>
<evidence type="ECO:0000250" key="1">
    <source>
        <dbReference type="UniProtKB" id="P0AA80"/>
    </source>
</evidence>
<evidence type="ECO:0000255" key="2"/>
<evidence type="ECO:0000305" key="3"/>
<protein>
    <recommendedName>
        <fullName evidence="1">Probable galactarate/D-glucarate transporter GarP</fullName>
    </recommendedName>
    <alternativeName>
        <fullName>D-galactarate permease</fullName>
    </alternativeName>
</protein>
<sequence length="444" mass="49009">MILDTVDEKKKGVHTRYLILLIIFIVTAVNYADRATLSIAGTEVAKELQLSAVSMGYIFSAFGWAYLLMQIPGGWLLDKFGSKKVYTYSLFFWSLFTFLQGFVDMFPLAWAGISMFFMRFMLGFSEAPSFPANARIVAAWFPTKERGTASAIFNSAQYFSLALFSPLLGWLTFAWGWEHVFTVMGVIGFVLTALWIKLIHNPTDHPRMSAEELKFISENGAVVDMDHKKPGSAAASGPKLHYIKQLLSNRMMLGVFFGQYFINTITWFFLTWFPIYLVQEKGMSILKVGLVASIPALCGFAGGVLGGVFSDYLIKRGLSLTLARKLPIVLGMLLASTIILCNYTNNTTLVVMLMALAFFGKGFGALGWPVISDTAPKEIVGLCGGVFNVFGNVASIVTPLVIGYLVSELHSFNAALVFVGCSALMAMVCYLFVVGDIKRMELQK</sequence>
<keyword id="KW-0997">Cell inner membrane</keyword>
<keyword id="KW-1003">Cell membrane</keyword>
<keyword id="KW-0472">Membrane</keyword>
<keyword id="KW-1185">Reference proteome</keyword>
<keyword id="KW-0812">Transmembrane</keyword>
<keyword id="KW-1133">Transmembrane helix</keyword>
<keyword id="KW-0813">Transport</keyword>
<feature type="chain" id="PRO_0000121383" description="Probable galactarate/D-glucarate transporter GarP">
    <location>
        <begin position="1"/>
        <end position="444"/>
    </location>
</feature>
<feature type="transmembrane region" description="Helical" evidence="2">
    <location>
        <begin position="12"/>
        <end position="32"/>
    </location>
</feature>
<feature type="transmembrane region" description="Helical" evidence="2">
    <location>
        <begin position="57"/>
        <end position="77"/>
    </location>
</feature>
<feature type="transmembrane region" description="Helical" evidence="2">
    <location>
        <begin position="90"/>
        <end position="110"/>
    </location>
</feature>
<feature type="transmembrane region" description="Helical" evidence="2">
    <location>
        <begin position="111"/>
        <end position="131"/>
    </location>
</feature>
<feature type="transmembrane region" description="Helical" evidence="2">
    <location>
        <begin position="158"/>
        <end position="178"/>
    </location>
</feature>
<feature type="transmembrane region" description="Helical" evidence="2">
    <location>
        <begin position="179"/>
        <end position="199"/>
    </location>
</feature>
<feature type="transmembrane region" description="Helical" evidence="2">
    <location>
        <begin position="253"/>
        <end position="273"/>
    </location>
</feature>
<feature type="transmembrane region" description="Helical" evidence="2">
    <location>
        <begin position="289"/>
        <end position="309"/>
    </location>
</feature>
<feature type="transmembrane region" description="Helical" evidence="2">
    <location>
        <begin position="320"/>
        <end position="340"/>
    </location>
</feature>
<feature type="transmembrane region" description="Helical" evidence="2">
    <location>
        <begin position="351"/>
        <end position="371"/>
    </location>
</feature>
<feature type="transmembrane region" description="Helical" evidence="2">
    <location>
        <begin position="386"/>
        <end position="406"/>
    </location>
</feature>
<feature type="transmembrane region" description="Helical" evidence="2">
    <location>
        <begin position="414"/>
        <end position="434"/>
    </location>
</feature>
<comment type="function">
    <text evidence="1">Probably involved in the uptake of galactarate and/or D-glucarate (By similarity). May also transport D-glycerate (By similarity).</text>
</comment>
<comment type="catalytic activity">
    <reaction evidence="1">
        <text>galactarate(in) + H(+)(in) = galactarate(out) + H(+)(out)</text>
        <dbReference type="Rhea" id="RHEA:28478"/>
        <dbReference type="ChEBI" id="CHEBI:15378"/>
        <dbReference type="ChEBI" id="CHEBI:16537"/>
    </reaction>
</comment>
<comment type="catalytic activity">
    <reaction evidence="1">
        <text>D-glucarate(in) + H(+)(in) = D-glucarate(out) + H(+)(out)</text>
        <dbReference type="Rhea" id="RHEA:28474"/>
        <dbReference type="ChEBI" id="CHEBI:15378"/>
        <dbReference type="ChEBI" id="CHEBI:30612"/>
    </reaction>
</comment>
<comment type="catalytic activity">
    <reaction evidence="1">
        <text>(R)-glycerate(in) + H(+)(in) = (R)-glycerate(out) + H(+)(out)</text>
        <dbReference type="Rhea" id="RHEA:70927"/>
        <dbReference type="ChEBI" id="CHEBI:15378"/>
        <dbReference type="ChEBI" id="CHEBI:16659"/>
    </reaction>
</comment>
<comment type="subcellular location">
    <subcellularLocation>
        <location evidence="1">Cell inner membrane</location>
        <topology evidence="2">Multi-pass membrane protein</topology>
    </subcellularLocation>
</comment>
<comment type="similarity">
    <text evidence="3">Belongs to the major facilitator superfamily. Phthalate permease family.</text>
</comment>
<organism>
    <name type="scientific">Escherichia coli O157:H7</name>
    <dbReference type="NCBI Taxonomy" id="83334"/>
    <lineage>
        <taxon>Bacteria</taxon>
        <taxon>Pseudomonadati</taxon>
        <taxon>Pseudomonadota</taxon>
        <taxon>Gammaproteobacteria</taxon>
        <taxon>Enterobacterales</taxon>
        <taxon>Enterobacteriaceae</taxon>
        <taxon>Escherichia</taxon>
    </lineage>
</organism>
<name>GARP_ECO57</name>
<reference key="1">
    <citation type="journal article" date="2001" name="Nature">
        <title>Genome sequence of enterohaemorrhagic Escherichia coli O157:H7.</title>
        <authorList>
            <person name="Perna N.T."/>
            <person name="Plunkett G. III"/>
            <person name="Burland V."/>
            <person name="Mau B."/>
            <person name="Glasner J.D."/>
            <person name="Rose D.J."/>
            <person name="Mayhew G.F."/>
            <person name="Evans P.S."/>
            <person name="Gregor J."/>
            <person name="Kirkpatrick H.A."/>
            <person name="Posfai G."/>
            <person name="Hackett J."/>
            <person name="Klink S."/>
            <person name="Boutin A."/>
            <person name="Shao Y."/>
            <person name="Miller L."/>
            <person name="Grotbeck E.J."/>
            <person name="Davis N.W."/>
            <person name="Lim A."/>
            <person name="Dimalanta E.T."/>
            <person name="Potamousis K."/>
            <person name="Apodaca J."/>
            <person name="Anantharaman T.S."/>
            <person name="Lin J."/>
            <person name="Yen G."/>
            <person name="Schwartz D.C."/>
            <person name="Welch R.A."/>
            <person name="Blattner F.R."/>
        </authorList>
    </citation>
    <scope>NUCLEOTIDE SEQUENCE [LARGE SCALE GENOMIC DNA]</scope>
    <source>
        <strain>O157:H7 / EDL933 / ATCC 700927 / EHEC</strain>
    </source>
</reference>
<reference key="2">
    <citation type="journal article" date="2001" name="DNA Res.">
        <title>Complete genome sequence of enterohemorrhagic Escherichia coli O157:H7 and genomic comparison with a laboratory strain K-12.</title>
        <authorList>
            <person name="Hayashi T."/>
            <person name="Makino K."/>
            <person name="Ohnishi M."/>
            <person name="Kurokawa K."/>
            <person name="Ishii K."/>
            <person name="Yokoyama K."/>
            <person name="Han C.-G."/>
            <person name="Ohtsubo E."/>
            <person name="Nakayama K."/>
            <person name="Murata T."/>
            <person name="Tanaka M."/>
            <person name="Tobe T."/>
            <person name="Iida T."/>
            <person name="Takami H."/>
            <person name="Honda T."/>
            <person name="Sasakawa C."/>
            <person name="Ogasawara N."/>
            <person name="Yasunaga T."/>
            <person name="Kuhara S."/>
            <person name="Shiba T."/>
            <person name="Hattori M."/>
            <person name="Shinagawa H."/>
        </authorList>
    </citation>
    <scope>NUCLEOTIDE SEQUENCE [LARGE SCALE GENOMIC DNA]</scope>
    <source>
        <strain>O157:H7 / Sakai / RIMD 0509952 / EHEC</strain>
    </source>
</reference>